<gene>
    <name evidence="1" type="primary">nadE</name>
    <name type="ordered locus">SaurJH1_2002</name>
</gene>
<keyword id="KW-0067">ATP-binding</keyword>
<keyword id="KW-0436">Ligase</keyword>
<keyword id="KW-0460">Magnesium</keyword>
<keyword id="KW-0479">Metal-binding</keyword>
<keyword id="KW-0520">NAD</keyword>
<keyword id="KW-0547">Nucleotide-binding</keyword>
<protein>
    <recommendedName>
        <fullName evidence="1">NH(3)-dependent NAD(+) synthetase</fullName>
        <ecNumber evidence="1">6.3.1.5</ecNumber>
    </recommendedName>
</protein>
<proteinExistence type="inferred from homology"/>
<dbReference type="EC" id="6.3.1.5" evidence="1"/>
<dbReference type="EMBL" id="CP000736">
    <property type="protein sequence ID" value="ABR52836.1"/>
    <property type="molecule type" value="Genomic_DNA"/>
</dbReference>
<dbReference type="SMR" id="A6U318"/>
<dbReference type="KEGG" id="sah:SaurJH1_2002"/>
<dbReference type="HOGENOM" id="CLU_059327_3_0_9"/>
<dbReference type="UniPathway" id="UPA00253">
    <property type="reaction ID" value="UER00333"/>
</dbReference>
<dbReference type="GO" id="GO:0005737">
    <property type="term" value="C:cytoplasm"/>
    <property type="evidence" value="ECO:0007669"/>
    <property type="project" value="InterPro"/>
</dbReference>
<dbReference type="GO" id="GO:0005524">
    <property type="term" value="F:ATP binding"/>
    <property type="evidence" value="ECO:0007669"/>
    <property type="project" value="UniProtKB-UniRule"/>
</dbReference>
<dbReference type="GO" id="GO:0004359">
    <property type="term" value="F:glutaminase activity"/>
    <property type="evidence" value="ECO:0007669"/>
    <property type="project" value="InterPro"/>
</dbReference>
<dbReference type="GO" id="GO:0046872">
    <property type="term" value="F:metal ion binding"/>
    <property type="evidence" value="ECO:0007669"/>
    <property type="project" value="UniProtKB-KW"/>
</dbReference>
<dbReference type="GO" id="GO:0003952">
    <property type="term" value="F:NAD+ synthase (glutamine-hydrolyzing) activity"/>
    <property type="evidence" value="ECO:0007669"/>
    <property type="project" value="InterPro"/>
</dbReference>
<dbReference type="GO" id="GO:0008795">
    <property type="term" value="F:NAD+ synthase activity"/>
    <property type="evidence" value="ECO:0007669"/>
    <property type="project" value="UniProtKB-UniRule"/>
</dbReference>
<dbReference type="GO" id="GO:0009435">
    <property type="term" value="P:NAD biosynthetic process"/>
    <property type="evidence" value="ECO:0007669"/>
    <property type="project" value="UniProtKB-UniRule"/>
</dbReference>
<dbReference type="CDD" id="cd00553">
    <property type="entry name" value="NAD_synthase"/>
    <property type="match status" value="1"/>
</dbReference>
<dbReference type="FunFam" id="3.40.50.620:FF:000015">
    <property type="entry name" value="NH(3)-dependent NAD(+) synthetase"/>
    <property type="match status" value="1"/>
</dbReference>
<dbReference type="Gene3D" id="3.40.50.620">
    <property type="entry name" value="HUPs"/>
    <property type="match status" value="1"/>
</dbReference>
<dbReference type="HAMAP" id="MF_00193">
    <property type="entry name" value="NadE_ammonia_dep"/>
    <property type="match status" value="1"/>
</dbReference>
<dbReference type="InterPro" id="IPR022310">
    <property type="entry name" value="NAD/GMP_synthase"/>
</dbReference>
<dbReference type="InterPro" id="IPR003694">
    <property type="entry name" value="NAD_synthase"/>
</dbReference>
<dbReference type="InterPro" id="IPR022926">
    <property type="entry name" value="NH(3)-dep_NAD(+)_synth"/>
</dbReference>
<dbReference type="InterPro" id="IPR014729">
    <property type="entry name" value="Rossmann-like_a/b/a_fold"/>
</dbReference>
<dbReference type="NCBIfam" id="TIGR00552">
    <property type="entry name" value="nadE"/>
    <property type="match status" value="1"/>
</dbReference>
<dbReference type="NCBIfam" id="NF001979">
    <property type="entry name" value="PRK00768.1"/>
    <property type="match status" value="1"/>
</dbReference>
<dbReference type="PANTHER" id="PTHR23090">
    <property type="entry name" value="NH 3 /GLUTAMINE-DEPENDENT NAD + SYNTHETASE"/>
    <property type="match status" value="1"/>
</dbReference>
<dbReference type="PANTHER" id="PTHR23090:SF7">
    <property type="entry name" value="NH(3)-DEPENDENT NAD(+) SYNTHETASE"/>
    <property type="match status" value="1"/>
</dbReference>
<dbReference type="Pfam" id="PF02540">
    <property type="entry name" value="NAD_synthase"/>
    <property type="match status" value="1"/>
</dbReference>
<dbReference type="SUPFAM" id="SSF52402">
    <property type="entry name" value="Adenine nucleotide alpha hydrolases-like"/>
    <property type="match status" value="1"/>
</dbReference>
<reference key="1">
    <citation type="submission" date="2007-06" db="EMBL/GenBank/DDBJ databases">
        <title>Complete sequence of chromosome of Staphylococcus aureus subsp. aureus JH1.</title>
        <authorList>
            <consortium name="US DOE Joint Genome Institute"/>
            <person name="Copeland A."/>
            <person name="Lucas S."/>
            <person name="Lapidus A."/>
            <person name="Barry K."/>
            <person name="Detter J.C."/>
            <person name="Glavina del Rio T."/>
            <person name="Hammon N."/>
            <person name="Israni S."/>
            <person name="Dalin E."/>
            <person name="Tice H."/>
            <person name="Pitluck S."/>
            <person name="Chain P."/>
            <person name="Malfatti S."/>
            <person name="Shin M."/>
            <person name="Vergez L."/>
            <person name="Schmutz J."/>
            <person name="Larimer F."/>
            <person name="Land M."/>
            <person name="Hauser L."/>
            <person name="Kyrpides N."/>
            <person name="Ivanova N."/>
            <person name="Tomasz A."/>
            <person name="Richardson P."/>
        </authorList>
    </citation>
    <scope>NUCLEOTIDE SEQUENCE [LARGE SCALE GENOMIC DNA]</scope>
    <source>
        <strain>JH1</strain>
    </source>
</reference>
<feature type="chain" id="PRO_1000077613" description="NH(3)-dependent NAD(+) synthetase">
    <location>
        <begin position="1"/>
        <end position="273"/>
    </location>
</feature>
<feature type="binding site" evidence="1">
    <location>
        <begin position="47"/>
        <end position="54"/>
    </location>
    <ligand>
        <name>ATP</name>
        <dbReference type="ChEBI" id="CHEBI:30616"/>
    </ligand>
</feature>
<feature type="binding site" evidence="1">
    <location>
        <position position="53"/>
    </location>
    <ligand>
        <name>Mg(2+)</name>
        <dbReference type="ChEBI" id="CHEBI:18420"/>
    </ligand>
</feature>
<feature type="binding site" evidence="1">
    <location>
        <position position="139"/>
    </location>
    <ligand>
        <name>deamido-NAD(+)</name>
        <dbReference type="ChEBI" id="CHEBI:58437"/>
    </ligand>
</feature>
<feature type="binding site" evidence="1">
    <location>
        <position position="159"/>
    </location>
    <ligand>
        <name>ATP</name>
        <dbReference type="ChEBI" id="CHEBI:30616"/>
    </ligand>
</feature>
<feature type="binding site" evidence="1">
    <location>
        <position position="164"/>
    </location>
    <ligand>
        <name>Mg(2+)</name>
        <dbReference type="ChEBI" id="CHEBI:18420"/>
    </ligand>
</feature>
<feature type="binding site" evidence="1">
    <location>
        <position position="172"/>
    </location>
    <ligand>
        <name>deamido-NAD(+)</name>
        <dbReference type="ChEBI" id="CHEBI:58437"/>
    </ligand>
</feature>
<feature type="binding site" evidence="1">
    <location>
        <position position="179"/>
    </location>
    <ligand>
        <name>deamido-NAD(+)</name>
        <dbReference type="ChEBI" id="CHEBI:58437"/>
    </ligand>
</feature>
<feature type="binding site" evidence="1">
    <location>
        <position position="188"/>
    </location>
    <ligand>
        <name>ATP</name>
        <dbReference type="ChEBI" id="CHEBI:30616"/>
    </ligand>
</feature>
<feature type="binding site" evidence="1">
    <location>
        <position position="210"/>
    </location>
    <ligand>
        <name>ATP</name>
        <dbReference type="ChEBI" id="CHEBI:30616"/>
    </ligand>
</feature>
<feature type="binding site" evidence="1">
    <location>
        <begin position="259"/>
        <end position="260"/>
    </location>
    <ligand>
        <name>deamido-NAD(+)</name>
        <dbReference type="ChEBI" id="CHEBI:58437"/>
    </ligand>
</feature>
<organism>
    <name type="scientific">Staphylococcus aureus (strain JH1)</name>
    <dbReference type="NCBI Taxonomy" id="359787"/>
    <lineage>
        <taxon>Bacteria</taxon>
        <taxon>Bacillati</taxon>
        <taxon>Bacillota</taxon>
        <taxon>Bacilli</taxon>
        <taxon>Bacillales</taxon>
        <taxon>Staphylococcaceae</taxon>
        <taxon>Staphylococcus</taxon>
    </lineage>
</organism>
<name>NADE_STAA2</name>
<comment type="function">
    <text evidence="1">Catalyzes the ATP-dependent amidation of deamido-NAD to form NAD. Uses ammonia as a nitrogen source.</text>
</comment>
<comment type="catalytic activity">
    <reaction evidence="1">
        <text>deamido-NAD(+) + NH4(+) + ATP = AMP + diphosphate + NAD(+) + H(+)</text>
        <dbReference type="Rhea" id="RHEA:21188"/>
        <dbReference type="ChEBI" id="CHEBI:15378"/>
        <dbReference type="ChEBI" id="CHEBI:28938"/>
        <dbReference type="ChEBI" id="CHEBI:30616"/>
        <dbReference type="ChEBI" id="CHEBI:33019"/>
        <dbReference type="ChEBI" id="CHEBI:57540"/>
        <dbReference type="ChEBI" id="CHEBI:58437"/>
        <dbReference type="ChEBI" id="CHEBI:456215"/>
        <dbReference type="EC" id="6.3.1.5"/>
    </reaction>
</comment>
<comment type="pathway">
    <text evidence="1">Cofactor biosynthesis; NAD(+) biosynthesis; NAD(+) from deamido-NAD(+) (ammonia route): step 1/1.</text>
</comment>
<comment type="subunit">
    <text evidence="1">Homodimer.</text>
</comment>
<comment type="similarity">
    <text evidence="1">Belongs to the NAD synthetase family.</text>
</comment>
<accession>A6U318</accession>
<sequence length="273" mass="30683">MSKLQDVIVQEMKVKKRIDSAEEIMELKQFIKNYVQSHSFIKSLVLGISGGQDSTLVGKLVQMSVNELREEGIDCTFIAVKLPYGVQKDADEVDQALRFIEPDEIVTVNIKPAVDQSVQSLKEAGIVLTDFQKGNEKARERMKVQFSIASNRQGIVVGTDHSAENITGFYTKYGDGAADIAPIFGLNKRQGRQLLAYLGAPKELYEKTPTADLEDDKPQLPDEDALGVTYEAIDNYLEGKPVTPEEQKVIENHYIRNAHKRELAYTRYTWPKS</sequence>
<evidence type="ECO:0000255" key="1">
    <source>
        <dbReference type="HAMAP-Rule" id="MF_00193"/>
    </source>
</evidence>